<protein>
    <recommendedName>
        <fullName>Naringenin,2-oxoglutarate 3-dioxygenase</fullName>
        <ecNumber evidence="1">1.14.11.9</ecNumber>
    </recommendedName>
    <alternativeName>
        <fullName>FHT</fullName>
    </alternativeName>
    <alternativeName>
        <fullName>Flavanone-3-hydroxylase</fullName>
        <shortName>F3H</shortName>
    </alternativeName>
</protein>
<comment type="function">
    <text>Catalyzes the 3-beta-hydroxylation of 2S-flavanones to 2R,3R-dihydroflavonols which are intermediates in the biosynthesis of flavonols, anthocyanidins, catechins and proanthocyanidins in plants.</text>
</comment>
<comment type="catalytic activity">
    <reaction evidence="1">
        <text>a (2S)-flavan-4-one + 2-oxoglutarate + O2 = a (2R,3R)-dihydroflavonol + succinate + CO2</text>
        <dbReference type="Rhea" id="RHEA:18621"/>
        <dbReference type="ChEBI" id="CHEBI:15379"/>
        <dbReference type="ChEBI" id="CHEBI:16526"/>
        <dbReference type="ChEBI" id="CHEBI:16810"/>
        <dbReference type="ChEBI" id="CHEBI:30031"/>
        <dbReference type="ChEBI" id="CHEBI:138188"/>
        <dbReference type="ChEBI" id="CHEBI:140377"/>
        <dbReference type="EC" id="1.14.11.9"/>
    </reaction>
</comment>
<comment type="cofactor">
    <cofactor evidence="2">
        <name>Fe(2+)</name>
        <dbReference type="ChEBI" id="CHEBI:29033"/>
    </cofactor>
    <text evidence="2">Binds 1 Fe(2+) ion per subunit.</text>
</comment>
<comment type="cofactor">
    <cofactor>
        <name>L-ascorbate</name>
        <dbReference type="ChEBI" id="CHEBI:38290"/>
    </cofactor>
</comment>
<comment type="pathway">
    <text>Secondary metabolite biosynthesis; flavonoid biosynthesis.</text>
</comment>
<comment type="similarity">
    <text evidence="3">Belongs to the iron/ascorbate-dependent oxidoreductase family.</text>
</comment>
<sequence length="356" mass="40210">MAAPISLKWEEHSLHENKFVRDEDERPKVPYNTFSNEIPVISLAGIDGCRRAEICDEIVKACEDWGIFQVVDHGVDTKLLSDMTGLARDFFHLPTQEKLRFDMTGGKKGGFIVSSHLQGEAVQDWREIVTYFSYPIKARDYSRWPDKPNEWRAVTEEYSKVLMGLACKLLEVLSEAMGLEKEALTKACVDMDQKVVVNYYPKCPQPDLTLGLKRHTDPGTITLLLQDQVGGLQATRDGGESWITVKPVEGAFVVNLGDHGHYLSNGRFKNADHQAVVNSSTSRLSIATFQNPAPEAIVYPLKINEGEKSIMEEPMTFMEMYKKKMSTDLELARLKKLAKDKQQDLEVVKPIQNIFA</sequence>
<proteinExistence type="evidence at transcript level"/>
<organism>
    <name type="scientific">Callistephus chinensis</name>
    <name type="common">China aster</name>
    <name type="synonym">Callistemma chinense</name>
    <dbReference type="NCBI Taxonomy" id="13379"/>
    <lineage>
        <taxon>Eukaryota</taxon>
        <taxon>Viridiplantae</taxon>
        <taxon>Streptophyta</taxon>
        <taxon>Embryophyta</taxon>
        <taxon>Tracheophyta</taxon>
        <taxon>Spermatophyta</taxon>
        <taxon>Magnoliopsida</taxon>
        <taxon>eudicotyledons</taxon>
        <taxon>Gunneridae</taxon>
        <taxon>Pentapetalae</taxon>
        <taxon>asterids</taxon>
        <taxon>campanulids</taxon>
        <taxon>Asterales</taxon>
        <taxon>Asteraceae</taxon>
        <taxon>Asteroideae</taxon>
        <taxon>Astereae</taxon>
        <taxon>Australasian lineages</taxon>
        <taxon>Asterinae</taxon>
        <taxon>Callistephus</taxon>
    </lineage>
</organism>
<evidence type="ECO:0000250" key="1">
    <source>
        <dbReference type="UniProtKB" id="Q7XZQ7"/>
    </source>
</evidence>
<evidence type="ECO:0000255" key="2">
    <source>
        <dbReference type="PROSITE-ProRule" id="PRU00805"/>
    </source>
</evidence>
<evidence type="ECO:0000305" key="3"/>
<gene>
    <name type="primary">FHT</name>
</gene>
<keyword id="KW-0223">Dioxygenase</keyword>
<keyword id="KW-0284">Flavonoid biosynthesis</keyword>
<keyword id="KW-0408">Iron</keyword>
<keyword id="KW-0479">Metal-binding</keyword>
<keyword id="KW-0560">Oxidoreductase</keyword>
<keyword id="KW-0847">Vitamin C</keyword>
<dbReference type="EC" id="1.14.11.9" evidence="1"/>
<dbReference type="EMBL" id="X72593">
    <property type="protein sequence ID" value="CAA51191.1"/>
    <property type="molecule type" value="mRNA"/>
</dbReference>
<dbReference type="PIR" id="S38336">
    <property type="entry name" value="S32147"/>
</dbReference>
<dbReference type="SMR" id="Q05963"/>
<dbReference type="UniPathway" id="UPA00154"/>
<dbReference type="GO" id="GO:0045486">
    <property type="term" value="F:flavanone 3-dioxygenase activity"/>
    <property type="evidence" value="ECO:0007669"/>
    <property type="project" value="UniProtKB-EC"/>
</dbReference>
<dbReference type="GO" id="GO:0031418">
    <property type="term" value="F:L-ascorbic acid binding"/>
    <property type="evidence" value="ECO:0007669"/>
    <property type="project" value="UniProtKB-KW"/>
</dbReference>
<dbReference type="GO" id="GO:0046872">
    <property type="term" value="F:metal ion binding"/>
    <property type="evidence" value="ECO:0007669"/>
    <property type="project" value="UniProtKB-KW"/>
</dbReference>
<dbReference type="GO" id="GO:0009813">
    <property type="term" value="P:flavonoid biosynthetic process"/>
    <property type="evidence" value="ECO:0007669"/>
    <property type="project" value="UniProtKB-UniPathway"/>
</dbReference>
<dbReference type="FunFam" id="2.60.120.330:FF:000016">
    <property type="entry name" value="Naringenin,2-oxoglutarate 3-dioxygenase"/>
    <property type="match status" value="1"/>
</dbReference>
<dbReference type="Gene3D" id="2.60.120.330">
    <property type="entry name" value="B-lactam Antibiotic, Isopenicillin N Synthase, Chain"/>
    <property type="match status" value="1"/>
</dbReference>
<dbReference type="InterPro" id="IPR026992">
    <property type="entry name" value="DIOX_N"/>
</dbReference>
<dbReference type="InterPro" id="IPR044861">
    <property type="entry name" value="IPNS-like_FE2OG_OXY"/>
</dbReference>
<dbReference type="InterPro" id="IPR027443">
    <property type="entry name" value="IPNS-like_sf"/>
</dbReference>
<dbReference type="InterPro" id="IPR005123">
    <property type="entry name" value="Oxoglu/Fe-dep_dioxygenase_dom"/>
</dbReference>
<dbReference type="InterPro" id="IPR050295">
    <property type="entry name" value="Plant_2OG-oxidoreductases"/>
</dbReference>
<dbReference type="PANTHER" id="PTHR47991">
    <property type="entry name" value="OXOGLUTARATE/IRON-DEPENDENT DIOXYGENASE"/>
    <property type="match status" value="1"/>
</dbReference>
<dbReference type="Pfam" id="PF03171">
    <property type="entry name" value="2OG-FeII_Oxy"/>
    <property type="match status" value="1"/>
</dbReference>
<dbReference type="Pfam" id="PF14226">
    <property type="entry name" value="DIOX_N"/>
    <property type="match status" value="1"/>
</dbReference>
<dbReference type="SUPFAM" id="SSF51197">
    <property type="entry name" value="Clavaminate synthase-like"/>
    <property type="match status" value="1"/>
</dbReference>
<dbReference type="PROSITE" id="PS51471">
    <property type="entry name" value="FE2OG_OXY"/>
    <property type="match status" value="1"/>
</dbReference>
<name>FL3H_CALCH</name>
<feature type="chain" id="PRO_0000067284" description="Naringenin,2-oxoglutarate 3-dioxygenase">
    <location>
        <begin position="1"/>
        <end position="356"/>
    </location>
</feature>
<feature type="domain" description="Fe2OG dioxygenase" evidence="2">
    <location>
        <begin position="188"/>
        <end position="292"/>
    </location>
</feature>
<feature type="binding site" evidence="2">
    <location>
        <position position="215"/>
    </location>
    <ligand>
        <name>Fe cation</name>
        <dbReference type="ChEBI" id="CHEBI:24875"/>
    </ligand>
</feature>
<feature type="binding site" evidence="2">
    <location>
        <position position="217"/>
    </location>
    <ligand>
        <name>Fe cation</name>
        <dbReference type="ChEBI" id="CHEBI:24875"/>
    </ligand>
</feature>
<feature type="binding site" evidence="2">
    <location>
        <position position="273"/>
    </location>
    <ligand>
        <name>Fe cation</name>
        <dbReference type="ChEBI" id="CHEBI:24875"/>
    </ligand>
</feature>
<feature type="binding site" evidence="2">
    <location>
        <position position="283"/>
    </location>
    <ligand>
        <name>2-oxoglutarate</name>
        <dbReference type="ChEBI" id="CHEBI:16810"/>
    </ligand>
</feature>
<accession>Q05963</accession>
<reference key="1">
    <citation type="journal article" date="1993" name="Eur. J. Biochem.">
        <title>Molecular characterization of flavanone 3 beta-hydroxylases. Consensus sequence, comparison with related enzymes and the role of conserved histidine residues.</title>
        <authorList>
            <person name="Britsch L."/>
            <person name="Dedio J."/>
            <person name="Saedler H."/>
            <person name="Forkmann G."/>
        </authorList>
    </citation>
    <scope>NUCLEOTIDE SEQUENCE [MRNA]</scope>
    <source>
        <tissue>Flower bud</tissue>
    </source>
</reference>